<proteinExistence type="inferred from homology"/>
<dbReference type="EC" id="2.7.8.7" evidence="1"/>
<dbReference type="EMBL" id="CP000325">
    <property type="protein sequence ID" value="ABL05912.1"/>
    <property type="molecule type" value="Genomic_DNA"/>
</dbReference>
<dbReference type="RefSeq" id="WP_011741517.1">
    <property type="nucleotide sequence ID" value="NC_008611.1"/>
</dbReference>
<dbReference type="SMR" id="A0PU93"/>
<dbReference type="KEGG" id="mul:MUL_3817"/>
<dbReference type="eggNOG" id="COG0736">
    <property type="taxonomic scope" value="Bacteria"/>
</dbReference>
<dbReference type="HOGENOM" id="CLU_089696_2_0_11"/>
<dbReference type="BRENDA" id="2.7.8.7">
    <property type="organism ID" value="8016"/>
</dbReference>
<dbReference type="Proteomes" id="UP000000765">
    <property type="component" value="Chromosome"/>
</dbReference>
<dbReference type="GO" id="GO:0005737">
    <property type="term" value="C:cytoplasm"/>
    <property type="evidence" value="ECO:0007669"/>
    <property type="project" value="UniProtKB-SubCell"/>
</dbReference>
<dbReference type="GO" id="GO:0008897">
    <property type="term" value="F:holo-[acyl-carrier-protein] synthase activity"/>
    <property type="evidence" value="ECO:0007669"/>
    <property type="project" value="UniProtKB-UniRule"/>
</dbReference>
<dbReference type="GO" id="GO:0000287">
    <property type="term" value="F:magnesium ion binding"/>
    <property type="evidence" value="ECO:0007669"/>
    <property type="project" value="UniProtKB-UniRule"/>
</dbReference>
<dbReference type="GO" id="GO:0006633">
    <property type="term" value="P:fatty acid biosynthetic process"/>
    <property type="evidence" value="ECO:0007669"/>
    <property type="project" value="UniProtKB-UniRule"/>
</dbReference>
<dbReference type="Gene3D" id="3.90.470.20">
    <property type="entry name" value="4'-phosphopantetheinyl transferase domain"/>
    <property type="match status" value="1"/>
</dbReference>
<dbReference type="HAMAP" id="MF_00101">
    <property type="entry name" value="AcpS"/>
    <property type="match status" value="1"/>
</dbReference>
<dbReference type="InterPro" id="IPR008278">
    <property type="entry name" value="4-PPantetheinyl_Trfase_dom"/>
</dbReference>
<dbReference type="InterPro" id="IPR037143">
    <property type="entry name" value="4-PPantetheinyl_Trfase_dom_sf"/>
</dbReference>
<dbReference type="InterPro" id="IPR002582">
    <property type="entry name" value="ACPS"/>
</dbReference>
<dbReference type="InterPro" id="IPR004568">
    <property type="entry name" value="Ppantetheine-prot_Trfase_dom"/>
</dbReference>
<dbReference type="NCBIfam" id="TIGR00556">
    <property type="entry name" value="pantethn_trn"/>
    <property type="match status" value="1"/>
</dbReference>
<dbReference type="NCBIfam" id="NF000831">
    <property type="entry name" value="PRK00070.3-1"/>
    <property type="match status" value="1"/>
</dbReference>
<dbReference type="Pfam" id="PF01648">
    <property type="entry name" value="ACPS"/>
    <property type="match status" value="1"/>
</dbReference>
<dbReference type="SUPFAM" id="SSF56214">
    <property type="entry name" value="4'-phosphopantetheinyl transferase"/>
    <property type="match status" value="1"/>
</dbReference>
<organism>
    <name type="scientific">Mycobacterium ulcerans (strain Agy99)</name>
    <dbReference type="NCBI Taxonomy" id="362242"/>
    <lineage>
        <taxon>Bacteria</taxon>
        <taxon>Bacillati</taxon>
        <taxon>Actinomycetota</taxon>
        <taxon>Actinomycetes</taxon>
        <taxon>Mycobacteriales</taxon>
        <taxon>Mycobacteriaceae</taxon>
        <taxon>Mycobacterium</taxon>
        <taxon>Mycobacterium ulcerans group</taxon>
    </lineage>
</organism>
<gene>
    <name evidence="1" type="primary">acpS</name>
    <name type="ordered locus">MUL_3817</name>
</gene>
<accession>A0PU93</accession>
<keyword id="KW-0963">Cytoplasm</keyword>
<keyword id="KW-0275">Fatty acid biosynthesis</keyword>
<keyword id="KW-0276">Fatty acid metabolism</keyword>
<keyword id="KW-0444">Lipid biosynthesis</keyword>
<keyword id="KW-0443">Lipid metabolism</keyword>
<keyword id="KW-0460">Magnesium</keyword>
<keyword id="KW-0479">Metal-binding</keyword>
<keyword id="KW-0808">Transferase</keyword>
<reference key="1">
    <citation type="journal article" date="2007" name="Genome Res.">
        <title>Reductive evolution and niche adaptation inferred from the genome of Mycobacterium ulcerans, the causative agent of Buruli ulcer.</title>
        <authorList>
            <person name="Stinear T.P."/>
            <person name="Seemann T."/>
            <person name="Pidot S."/>
            <person name="Frigui W."/>
            <person name="Reysset G."/>
            <person name="Garnier T."/>
            <person name="Meurice G."/>
            <person name="Simon D."/>
            <person name="Bouchier C."/>
            <person name="Ma L."/>
            <person name="Tichit M."/>
            <person name="Porter J.L."/>
            <person name="Ryan J."/>
            <person name="Johnson P.D.R."/>
            <person name="Davies J.K."/>
            <person name="Jenkin G.A."/>
            <person name="Small P.L.C."/>
            <person name="Jones L.M."/>
            <person name="Tekaia F."/>
            <person name="Laval F."/>
            <person name="Daffe M."/>
            <person name="Parkhill J."/>
            <person name="Cole S.T."/>
        </authorList>
    </citation>
    <scope>NUCLEOTIDE SEQUENCE [LARGE SCALE GENOMIC DNA]</scope>
    <source>
        <strain>Agy99</strain>
    </source>
</reference>
<protein>
    <recommendedName>
        <fullName evidence="1">Holo-[acyl-carrier-protein] synthase</fullName>
        <shortName evidence="1">Holo-ACP synthase</shortName>
        <ecNumber evidence="1">2.7.8.7</ecNumber>
    </recommendedName>
    <alternativeName>
        <fullName evidence="1">4'-phosphopantetheinyl transferase AcpS</fullName>
    </alternativeName>
</protein>
<evidence type="ECO:0000255" key="1">
    <source>
        <dbReference type="HAMAP-Rule" id="MF_00101"/>
    </source>
</evidence>
<sequence length="130" mass="13968">MGIVGVGIDLVSIPDFAEQVDQPGTAFAATFTPGERRDASDKSSSAARHLAARWAAKEAVIKAWSGSRFAQRPVLPEDIHRDIEVVTDMWGRPRVRLTGEIAKHLADVTIHVSLTHEGDTAAAVAILETS</sequence>
<name>ACPS_MYCUA</name>
<comment type="function">
    <text evidence="1">Transfers the 4'-phosphopantetheine moiety from coenzyme A to a Ser of acyl-carrier-protein.</text>
</comment>
<comment type="catalytic activity">
    <reaction evidence="1">
        <text>apo-[ACP] + CoA = holo-[ACP] + adenosine 3',5'-bisphosphate + H(+)</text>
        <dbReference type="Rhea" id="RHEA:12068"/>
        <dbReference type="Rhea" id="RHEA-COMP:9685"/>
        <dbReference type="Rhea" id="RHEA-COMP:9690"/>
        <dbReference type="ChEBI" id="CHEBI:15378"/>
        <dbReference type="ChEBI" id="CHEBI:29999"/>
        <dbReference type="ChEBI" id="CHEBI:57287"/>
        <dbReference type="ChEBI" id="CHEBI:58343"/>
        <dbReference type="ChEBI" id="CHEBI:64479"/>
        <dbReference type="EC" id="2.7.8.7"/>
    </reaction>
</comment>
<comment type="cofactor">
    <cofactor evidence="1">
        <name>Mg(2+)</name>
        <dbReference type="ChEBI" id="CHEBI:18420"/>
    </cofactor>
</comment>
<comment type="subcellular location">
    <subcellularLocation>
        <location evidence="1">Cytoplasm</location>
    </subcellularLocation>
</comment>
<comment type="similarity">
    <text evidence="1">Belongs to the P-Pant transferase superfamily. AcpS family.</text>
</comment>
<feature type="chain" id="PRO_1000008459" description="Holo-[acyl-carrier-protein] synthase">
    <location>
        <begin position="1"/>
        <end position="130"/>
    </location>
</feature>
<feature type="binding site" evidence="1">
    <location>
        <position position="9"/>
    </location>
    <ligand>
        <name>Mg(2+)</name>
        <dbReference type="ChEBI" id="CHEBI:18420"/>
    </ligand>
</feature>
<feature type="binding site" evidence="1">
    <location>
        <position position="58"/>
    </location>
    <ligand>
        <name>Mg(2+)</name>
        <dbReference type="ChEBI" id="CHEBI:18420"/>
    </ligand>
</feature>